<keyword id="KW-1185">Reference proteome</keyword>
<keyword id="KW-0687">Ribonucleoprotein</keyword>
<keyword id="KW-0689">Ribosomal protein</keyword>
<gene>
    <name evidence="1" type="primary">rpsB</name>
    <name type="ordered locus">Acel_1542</name>
</gene>
<dbReference type="EMBL" id="CP000481">
    <property type="protein sequence ID" value="ABK53314.1"/>
    <property type="molecule type" value="Genomic_DNA"/>
</dbReference>
<dbReference type="RefSeq" id="WP_011720377.1">
    <property type="nucleotide sequence ID" value="NC_008578.1"/>
</dbReference>
<dbReference type="SMR" id="A0LV54"/>
<dbReference type="FunCoup" id="A0LV54">
    <property type="interactions" value="293"/>
</dbReference>
<dbReference type="STRING" id="351607.Acel_1542"/>
<dbReference type="KEGG" id="ace:Acel_1542"/>
<dbReference type="eggNOG" id="COG0052">
    <property type="taxonomic scope" value="Bacteria"/>
</dbReference>
<dbReference type="HOGENOM" id="CLU_040318_2_3_11"/>
<dbReference type="InParanoid" id="A0LV54"/>
<dbReference type="OrthoDB" id="9808036at2"/>
<dbReference type="Proteomes" id="UP000008221">
    <property type="component" value="Chromosome"/>
</dbReference>
<dbReference type="GO" id="GO:0022627">
    <property type="term" value="C:cytosolic small ribosomal subunit"/>
    <property type="evidence" value="ECO:0007669"/>
    <property type="project" value="TreeGrafter"/>
</dbReference>
<dbReference type="GO" id="GO:0003735">
    <property type="term" value="F:structural constituent of ribosome"/>
    <property type="evidence" value="ECO:0007669"/>
    <property type="project" value="InterPro"/>
</dbReference>
<dbReference type="GO" id="GO:0006412">
    <property type="term" value="P:translation"/>
    <property type="evidence" value="ECO:0007669"/>
    <property type="project" value="UniProtKB-UniRule"/>
</dbReference>
<dbReference type="CDD" id="cd01425">
    <property type="entry name" value="RPS2"/>
    <property type="match status" value="1"/>
</dbReference>
<dbReference type="FunFam" id="1.10.287.610:FF:000001">
    <property type="entry name" value="30S ribosomal protein S2"/>
    <property type="match status" value="1"/>
</dbReference>
<dbReference type="Gene3D" id="3.40.50.10490">
    <property type="entry name" value="Glucose-6-phosphate isomerase like protein, domain 1"/>
    <property type="match status" value="1"/>
</dbReference>
<dbReference type="Gene3D" id="1.10.287.610">
    <property type="entry name" value="Helix hairpin bin"/>
    <property type="match status" value="1"/>
</dbReference>
<dbReference type="HAMAP" id="MF_00291_B">
    <property type="entry name" value="Ribosomal_uS2_B"/>
    <property type="match status" value="1"/>
</dbReference>
<dbReference type="InterPro" id="IPR001865">
    <property type="entry name" value="Ribosomal_uS2"/>
</dbReference>
<dbReference type="InterPro" id="IPR005706">
    <property type="entry name" value="Ribosomal_uS2_bac/mit/plastid"/>
</dbReference>
<dbReference type="InterPro" id="IPR023591">
    <property type="entry name" value="Ribosomal_uS2_flav_dom_sf"/>
</dbReference>
<dbReference type="NCBIfam" id="TIGR01011">
    <property type="entry name" value="rpsB_bact"/>
    <property type="match status" value="1"/>
</dbReference>
<dbReference type="PANTHER" id="PTHR12534">
    <property type="entry name" value="30S RIBOSOMAL PROTEIN S2 PROKARYOTIC AND ORGANELLAR"/>
    <property type="match status" value="1"/>
</dbReference>
<dbReference type="PANTHER" id="PTHR12534:SF0">
    <property type="entry name" value="SMALL RIBOSOMAL SUBUNIT PROTEIN US2M"/>
    <property type="match status" value="1"/>
</dbReference>
<dbReference type="Pfam" id="PF00318">
    <property type="entry name" value="Ribosomal_S2"/>
    <property type="match status" value="1"/>
</dbReference>
<dbReference type="PRINTS" id="PR00395">
    <property type="entry name" value="RIBOSOMALS2"/>
</dbReference>
<dbReference type="SUPFAM" id="SSF52313">
    <property type="entry name" value="Ribosomal protein S2"/>
    <property type="match status" value="1"/>
</dbReference>
<evidence type="ECO:0000255" key="1">
    <source>
        <dbReference type="HAMAP-Rule" id="MF_00291"/>
    </source>
</evidence>
<evidence type="ECO:0000256" key="2">
    <source>
        <dbReference type="SAM" id="MobiDB-lite"/>
    </source>
</evidence>
<evidence type="ECO:0000305" key="3"/>
<organism>
    <name type="scientific">Acidothermus cellulolyticus (strain ATCC 43068 / DSM 8971 / 11B)</name>
    <dbReference type="NCBI Taxonomy" id="351607"/>
    <lineage>
        <taxon>Bacteria</taxon>
        <taxon>Bacillati</taxon>
        <taxon>Actinomycetota</taxon>
        <taxon>Actinomycetes</taxon>
        <taxon>Acidothermales</taxon>
        <taxon>Acidothermaceae</taxon>
        <taxon>Acidothermus</taxon>
    </lineage>
</organism>
<reference key="1">
    <citation type="journal article" date="2009" name="Genome Res.">
        <title>Complete genome of the cellulolytic thermophile Acidothermus cellulolyticus 11B provides insights into its ecophysiological and evolutionary adaptations.</title>
        <authorList>
            <person name="Barabote R.D."/>
            <person name="Xie G."/>
            <person name="Leu D.H."/>
            <person name="Normand P."/>
            <person name="Necsulea A."/>
            <person name="Daubin V."/>
            <person name="Medigue C."/>
            <person name="Adney W.S."/>
            <person name="Xu X.C."/>
            <person name="Lapidus A."/>
            <person name="Parales R.E."/>
            <person name="Detter C."/>
            <person name="Pujic P."/>
            <person name="Bruce D."/>
            <person name="Lavire C."/>
            <person name="Challacombe J.F."/>
            <person name="Brettin T.S."/>
            <person name="Berry A.M."/>
        </authorList>
    </citation>
    <scope>NUCLEOTIDE SEQUENCE [LARGE SCALE GENOMIC DNA]</scope>
    <source>
        <strain>ATCC 43068 / DSM 8971 / 11B</strain>
    </source>
</reference>
<protein>
    <recommendedName>
        <fullName evidence="1">Small ribosomal subunit protein uS2</fullName>
    </recommendedName>
    <alternativeName>
        <fullName evidence="3">30S ribosomal protein S2</fullName>
    </alternativeName>
</protein>
<sequence length="275" mass="30670">MAVVTMKELLAGGVHFGHQTRRWNPKMKRFIFTERNGIYIIDLQQSLSYIERAYEFVKDTVARGGTVLFVGTKKQAQQAIAEQATRVGMPYVNQRWLGGMLTNFSTVYKRLQRLKELELLEQNGSLFGQATKKEALMLQREKEKLERTLGGIRDMTRLPAAVWIVDTKKEHIAVDEARKLGIPVVAILDTNCDPDEVDYPIPGNDDAIRSVSLLTRVIADAVAEGLMARAAARATDGKPEPEPVPGQELGADEPLADWERELLARQGVDADELGV</sequence>
<feature type="chain" id="PRO_1000003877" description="Small ribosomal subunit protein uS2">
    <location>
        <begin position="1"/>
        <end position="275"/>
    </location>
</feature>
<feature type="region of interest" description="Disordered" evidence="2">
    <location>
        <begin position="232"/>
        <end position="256"/>
    </location>
</feature>
<proteinExistence type="inferred from homology"/>
<name>RS2_ACIC1</name>
<comment type="similarity">
    <text evidence="1">Belongs to the universal ribosomal protein uS2 family.</text>
</comment>
<accession>A0LV54</accession>